<accession>P30434</accession>
<name>CD8B_PONPY</name>
<gene>
    <name type="primary">CD8B</name>
    <name type="synonym">CD8B1</name>
</gene>
<keyword id="KW-1064">Adaptive immunity</keyword>
<keyword id="KW-0025">Alternative splicing</keyword>
<keyword id="KW-1003">Cell membrane</keyword>
<keyword id="KW-1015">Disulfide bond</keyword>
<keyword id="KW-0325">Glycoprotein</keyword>
<keyword id="KW-0391">Immunity</keyword>
<keyword id="KW-0393">Immunoglobulin domain</keyword>
<keyword id="KW-0449">Lipoprotein</keyword>
<keyword id="KW-0472">Membrane</keyword>
<keyword id="KW-0564">Palmitate</keyword>
<keyword id="KW-0732">Signal</keyword>
<keyword id="KW-0812">Transmembrane</keyword>
<keyword id="KW-1133">Transmembrane helix</keyword>
<organism>
    <name type="scientific">Pongo pygmaeus</name>
    <name type="common">Bornean orangutan</name>
    <dbReference type="NCBI Taxonomy" id="9600"/>
    <lineage>
        <taxon>Eukaryota</taxon>
        <taxon>Metazoa</taxon>
        <taxon>Chordata</taxon>
        <taxon>Craniata</taxon>
        <taxon>Vertebrata</taxon>
        <taxon>Euteleostomi</taxon>
        <taxon>Mammalia</taxon>
        <taxon>Eutheria</taxon>
        <taxon>Euarchontoglires</taxon>
        <taxon>Primates</taxon>
        <taxon>Haplorrhini</taxon>
        <taxon>Catarrhini</taxon>
        <taxon>Hominidae</taxon>
        <taxon>Pongo</taxon>
    </lineage>
</organism>
<dbReference type="EMBL" id="X60222">
    <property type="protein sequence ID" value="CAA42783.1"/>
    <property type="molecule type" value="mRNA"/>
</dbReference>
<dbReference type="PIR" id="S25657">
    <property type="entry name" value="S25657"/>
</dbReference>
<dbReference type="SMR" id="P30434"/>
<dbReference type="GlyCosmos" id="P30434">
    <property type="glycosylation" value="1 site, No reported glycans"/>
</dbReference>
<dbReference type="GO" id="GO:0009986">
    <property type="term" value="C:cell surface"/>
    <property type="evidence" value="ECO:0007669"/>
    <property type="project" value="TreeGrafter"/>
</dbReference>
<dbReference type="GO" id="GO:0005886">
    <property type="term" value="C:plasma membrane"/>
    <property type="evidence" value="ECO:0007669"/>
    <property type="project" value="UniProtKB-SubCell"/>
</dbReference>
<dbReference type="GO" id="GO:0015026">
    <property type="term" value="F:coreceptor activity"/>
    <property type="evidence" value="ECO:0007669"/>
    <property type="project" value="InterPro"/>
</dbReference>
<dbReference type="GO" id="GO:0042288">
    <property type="term" value="F:MHC class I protein binding"/>
    <property type="evidence" value="ECO:0007669"/>
    <property type="project" value="InterPro"/>
</dbReference>
<dbReference type="GO" id="GO:0002250">
    <property type="term" value="P:adaptive immune response"/>
    <property type="evidence" value="ECO:0007669"/>
    <property type="project" value="UniProtKB-KW"/>
</dbReference>
<dbReference type="GO" id="GO:0050776">
    <property type="term" value="P:regulation of immune response"/>
    <property type="evidence" value="ECO:0007669"/>
    <property type="project" value="InterPro"/>
</dbReference>
<dbReference type="CDD" id="cd07700">
    <property type="entry name" value="IgV_CD8_beta"/>
    <property type="match status" value="1"/>
</dbReference>
<dbReference type="FunFam" id="2.60.40.10:FF:000645">
    <property type="entry name" value="T-cell surface glycoprotein CD8 beta chain"/>
    <property type="match status" value="1"/>
</dbReference>
<dbReference type="Gene3D" id="2.60.40.10">
    <property type="entry name" value="Immunoglobulins"/>
    <property type="match status" value="1"/>
</dbReference>
<dbReference type="InterPro" id="IPR042414">
    <property type="entry name" value="CD8B"/>
</dbReference>
<dbReference type="InterPro" id="IPR007110">
    <property type="entry name" value="Ig-like_dom"/>
</dbReference>
<dbReference type="InterPro" id="IPR036179">
    <property type="entry name" value="Ig-like_dom_sf"/>
</dbReference>
<dbReference type="InterPro" id="IPR013783">
    <property type="entry name" value="Ig-like_fold"/>
</dbReference>
<dbReference type="InterPro" id="IPR003599">
    <property type="entry name" value="Ig_sub"/>
</dbReference>
<dbReference type="InterPro" id="IPR013106">
    <property type="entry name" value="Ig_V-set"/>
</dbReference>
<dbReference type="PANTHER" id="PTHR11292">
    <property type="entry name" value="T-CELL SURFACE GLYCOPROTEIN CD8 BETA CHAIN"/>
    <property type="match status" value="1"/>
</dbReference>
<dbReference type="PANTHER" id="PTHR11292:SF7">
    <property type="entry name" value="T-CELL SURFACE GLYCOPROTEIN CD8 BETA CHAIN-RELATED"/>
    <property type="match status" value="1"/>
</dbReference>
<dbReference type="Pfam" id="PF07686">
    <property type="entry name" value="V-set"/>
    <property type="match status" value="1"/>
</dbReference>
<dbReference type="SMART" id="SM00409">
    <property type="entry name" value="IG"/>
    <property type="match status" value="1"/>
</dbReference>
<dbReference type="SMART" id="SM00406">
    <property type="entry name" value="IGv"/>
    <property type="match status" value="1"/>
</dbReference>
<dbReference type="SUPFAM" id="SSF48726">
    <property type="entry name" value="Immunoglobulin"/>
    <property type="match status" value="1"/>
</dbReference>
<dbReference type="PROSITE" id="PS50835">
    <property type="entry name" value="IG_LIKE"/>
    <property type="match status" value="1"/>
</dbReference>
<feature type="signal peptide" evidence="1">
    <location>
        <begin position="1"/>
        <end position="21"/>
    </location>
</feature>
<feature type="chain" id="PRO_0000014645" description="T-cell surface glycoprotein CD8 beta chain">
    <location>
        <begin position="22"/>
        <end position="210"/>
    </location>
</feature>
<feature type="topological domain" description="Extracellular" evidence="4">
    <location>
        <begin position="22"/>
        <end position="170"/>
    </location>
</feature>
<feature type="transmembrane region" description="Helical" evidence="4">
    <location>
        <begin position="171"/>
        <end position="191"/>
    </location>
</feature>
<feature type="topological domain" description="Cytoplasmic" evidence="4">
    <location>
        <begin position="192"/>
        <end position="210"/>
    </location>
</feature>
<feature type="domain" description="Ig-like V-type">
    <location>
        <begin position="22"/>
        <end position="132"/>
    </location>
</feature>
<feature type="glycosylation site" description="N-linked (GlcNAc...) asparagine" evidence="4">
    <location>
        <position position="102"/>
    </location>
</feature>
<feature type="disulfide bond" evidence="5">
    <location>
        <begin position="41"/>
        <end position="116"/>
    </location>
</feature>
<evidence type="ECO:0000250" key="1"/>
<evidence type="ECO:0000250" key="2">
    <source>
        <dbReference type="UniProtKB" id="P10300"/>
    </source>
</evidence>
<evidence type="ECO:0000250" key="3">
    <source>
        <dbReference type="UniProtKB" id="P10966"/>
    </source>
</evidence>
<evidence type="ECO:0000255" key="4"/>
<evidence type="ECO:0000255" key="5">
    <source>
        <dbReference type="PROSITE-ProRule" id="PRU00114"/>
    </source>
</evidence>
<comment type="function">
    <text evidence="2 3">Integral membrane glycoprotein that plays an essential role in the immune response and serves multiple functions in responses against both external and internal offenses. In T-cells, functions primarily as a coreceptor for MHC class I molecule:peptide complex. The antigens presented by class I peptides are derived from cytosolic proteins while class II derived from extracellular proteins. Interacts simultaneously with the T-cell receptor (TCR) and the MHC class I proteins presented by antigen presenting cells (APCs). In turn, recruits the Src kinase LCK to the vicinity of the TCR-CD3 complex. A palmitoylation site in the cytoplasmic tail of CD8B chain contributes to partitioning of CD8 into the plasma membrane lipid rafts where signaling proteins are enriched. Once LCK recruited, it initiates different intracellular signaling pathways by phosphorylating various substrates ultimately leading to lymphokine production, motility, adhesion and activation of cytotoxic T-lymphocytes (CTLs). Additionally, plays a critical role in thymic selection of CD8+ T-cells.</text>
</comment>
<comment type="subunit">
    <text evidence="2 3">Forms disulfide-linked heterodimers with CD8A at the cell surface. Interacts with CD3D; this interaction couples TCR-CD3 with CD8. Interacts with LCK.</text>
</comment>
<comment type="subcellular location">
    <subcellularLocation>
        <location evidence="3">Cell membrane</location>
        <topology evidence="3">Single-pass type I membrane protein</topology>
    </subcellularLocation>
    <text evidence="3">Requires the partner CD8A for efficient cell surface expression. The heterodimer CD8A/CD8B localizes to lipid rafts due to CD8B cytoplasmic tail palmitoylation.</text>
</comment>
<comment type="alternative products">
    <event type="alternative splicing"/>
    <isoform>
        <id>P30434-1</id>
        <name>1</name>
        <sequence type="displayed"/>
    </isoform>
    <text>A number of isoforms are produced. Alternative splicing involves excision of the hinge or cytoplasmic domains.</text>
</comment>
<comment type="PTM">
    <text evidence="3">Phosphorylated as a consequence of T-cell activation.</text>
</comment>
<comment type="PTM">
    <text evidence="3">Palmitoylated at the cytoplasmic tail and thereby targets the heterodimer CD8A/CD8B to lipid rafts unlike CD8A homodimers.</text>
</comment>
<reference key="1">
    <citation type="journal article" date="1992" name="Immunogenetics">
        <title>Structure of CD8 alpha and beta chains of the orangutan: novel patterns of mRNA splicing encoding hingeless polypeptides.</title>
        <authorList>
            <person name="Lawlor D.A."/>
            <person name="Parham P."/>
        </authorList>
    </citation>
    <scope>NUCLEOTIDE SEQUENCE [MRNA]</scope>
    <source>
        <strain>Isolate Jari</strain>
    </source>
</reference>
<protein>
    <recommendedName>
        <fullName>T-cell surface glycoprotein CD8 beta chain</fullName>
    </recommendedName>
    <cdAntigenName>CD8b</cdAntigenName>
</protein>
<sequence length="210" mass="23693">MRPRLWLLLAAQLAVLHGSSVLQQTPAYIKVQTNKMVMLSCEAKISLSNMRIYWLRQRQAPSSDSHHEFLALWDSAKGTIHSEEVEQEKVAVFRDASRFILNLTSVKPEDSGIYFCMIVGSPELTFGKGTQLSVVDFLPTTAQPTKKSTPKRRVCRLPRPETQKGPLCSPITLGLLVAGVLVLLVSLGVAIHLCCRRRRARLRFMKQFYK</sequence>
<proteinExistence type="evidence at transcript level"/>